<reference key="1">
    <citation type="journal article" date="2006" name="Nature">
        <title>Insights from the genome of the biotrophic fungal plant pathogen Ustilago maydis.</title>
        <authorList>
            <person name="Kaemper J."/>
            <person name="Kahmann R."/>
            <person name="Boelker M."/>
            <person name="Ma L.-J."/>
            <person name="Brefort T."/>
            <person name="Saville B.J."/>
            <person name="Banuett F."/>
            <person name="Kronstad J.W."/>
            <person name="Gold S.E."/>
            <person name="Mueller O."/>
            <person name="Perlin M.H."/>
            <person name="Woesten H.A.B."/>
            <person name="de Vries R."/>
            <person name="Ruiz-Herrera J."/>
            <person name="Reynaga-Pena C.G."/>
            <person name="Snetselaar K."/>
            <person name="McCann M."/>
            <person name="Perez-Martin J."/>
            <person name="Feldbruegge M."/>
            <person name="Basse C.W."/>
            <person name="Steinberg G."/>
            <person name="Ibeas J.I."/>
            <person name="Holloman W."/>
            <person name="Guzman P."/>
            <person name="Farman M.L."/>
            <person name="Stajich J.E."/>
            <person name="Sentandreu R."/>
            <person name="Gonzalez-Prieto J.M."/>
            <person name="Kennell J.C."/>
            <person name="Molina L."/>
            <person name="Schirawski J."/>
            <person name="Mendoza-Mendoza A."/>
            <person name="Greilinger D."/>
            <person name="Muench K."/>
            <person name="Roessel N."/>
            <person name="Scherer M."/>
            <person name="Vranes M."/>
            <person name="Ladendorf O."/>
            <person name="Vincon V."/>
            <person name="Fuchs U."/>
            <person name="Sandrock B."/>
            <person name="Meng S."/>
            <person name="Ho E.C.H."/>
            <person name="Cahill M.J."/>
            <person name="Boyce K.J."/>
            <person name="Klose J."/>
            <person name="Klosterman S.J."/>
            <person name="Deelstra H.J."/>
            <person name="Ortiz-Castellanos L."/>
            <person name="Li W."/>
            <person name="Sanchez-Alonso P."/>
            <person name="Schreier P.H."/>
            <person name="Haeuser-Hahn I."/>
            <person name="Vaupel M."/>
            <person name="Koopmann E."/>
            <person name="Friedrich G."/>
            <person name="Voss H."/>
            <person name="Schlueter T."/>
            <person name="Margolis J."/>
            <person name="Platt D."/>
            <person name="Swimmer C."/>
            <person name="Gnirke A."/>
            <person name="Chen F."/>
            <person name="Vysotskaia V."/>
            <person name="Mannhaupt G."/>
            <person name="Gueldener U."/>
            <person name="Muensterkoetter M."/>
            <person name="Haase D."/>
            <person name="Oesterheld M."/>
            <person name="Mewes H.-W."/>
            <person name="Mauceli E.W."/>
            <person name="DeCaprio D."/>
            <person name="Wade C.M."/>
            <person name="Butler J."/>
            <person name="Young S.K."/>
            <person name="Jaffe D.B."/>
            <person name="Calvo S.E."/>
            <person name="Nusbaum C."/>
            <person name="Galagan J.E."/>
            <person name="Birren B.W."/>
        </authorList>
    </citation>
    <scope>NUCLEOTIDE SEQUENCE [LARGE SCALE GENOMIC DNA]</scope>
    <source>
        <strain>DSM 14603 / FGSC 9021 / UM521</strain>
    </source>
</reference>
<reference key="2">
    <citation type="submission" date="2014-09" db="EMBL/GenBank/DDBJ databases">
        <authorList>
            <person name="Gueldener U."/>
            <person name="Muensterkoetter M."/>
            <person name="Walter M.C."/>
            <person name="Mannhaupt G."/>
            <person name="Kahmann R."/>
        </authorList>
    </citation>
    <scope>GENOME REANNOTATION</scope>
    <source>
        <strain>DSM 14603 / FGSC 9021 / UM521</strain>
    </source>
</reference>
<dbReference type="EC" id="2.7.7.4" evidence="1"/>
<dbReference type="EMBL" id="CM003143">
    <property type="protein sequence ID" value="KIS70029.1"/>
    <property type="molecule type" value="Genomic_DNA"/>
</dbReference>
<dbReference type="RefSeq" id="XP_011388173.1">
    <property type="nucleotide sequence ID" value="XM_011389871.1"/>
</dbReference>
<dbReference type="SMR" id="Q4P460"/>
<dbReference type="FunCoup" id="Q4P460">
    <property type="interactions" value="209"/>
</dbReference>
<dbReference type="STRING" id="237631.Q4P460"/>
<dbReference type="EnsemblFungi" id="KIS70029">
    <property type="protein sequence ID" value="KIS70029"/>
    <property type="gene ID" value="UMAG_05103"/>
</dbReference>
<dbReference type="GeneID" id="23565083"/>
<dbReference type="KEGG" id="uma:UMAG_05103"/>
<dbReference type="VEuPathDB" id="FungiDB:UMAG_05103"/>
<dbReference type="eggNOG" id="KOG0636">
    <property type="taxonomic scope" value="Eukaryota"/>
</dbReference>
<dbReference type="HOGENOM" id="CLU_022950_0_0_1"/>
<dbReference type="InParanoid" id="Q4P460"/>
<dbReference type="OMA" id="MEMRYAG"/>
<dbReference type="OrthoDB" id="468at2759"/>
<dbReference type="UniPathway" id="UPA00140">
    <property type="reaction ID" value="UER00204"/>
</dbReference>
<dbReference type="Proteomes" id="UP000000561">
    <property type="component" value="Chromosome 4"/>
</dbReference>
<dbReference type="GO" id="GO:0005737">
    <property type="term" value="C:cytoplasm"/>
    <property type="evidence" value="ECO:0007669"/>
    <property type="project" value="UniProtKB-SubCell"/>
</dbReference>
<dbReference type="GO" id="GO:0004020">
    <property type="term" value="F:adenylylsulfate kinase activity"/>
    <property type="evidence" value="ECO:0007669"/>
    <property type="project" value="InterPro"/>
</dbReference>
<dbReference type="GO" id="GO:0005524">
    <property type="term" value="F:ATP binding"/>
    <property type="evidence" value="ECO:0007669"/>
    <property type="project" value="UniProtKB-KW"/>
</dbReference>
<dbReference type="GO" id="GO:0004781">
    <property type="term" value="F:sulfate adenylyltransferase (ATP) activity"/>
    <property type="evidence" value="ECO:0000318"/>
    <property type="project" value="GO_Central"/>
</dbReference>
<dbReference type="GO" id="GO:0019344">
    <property type="term" value="P:cysteine biosynthetic process"/>
    <property type="evidence" value="ECO:0007669"/>
    <property type="project" value="UniProtKB-KW"/>
</dbReference>
<dbReference type="GO" id="GO:0070814">
    <property type="term" value="P:hydrogen sulfide biosynthetic process"/>
    <property type="evidence" value="ECO:0007669"/>
    <property type="project" value="UniProtKB-UniRule"/>
</dbReference>
<dbReference type="GO" id="GO:0009086">
    <property type="term" value="P:methionine biosynthetic process"/>
    <property type="evidence" value="ECO:0007669"/>
    <property type="project" value="UniProtKB-KW"/>
</dbReference>
<dbReference type="GO" id="GO:0019379">
    <property type="term" value="P:sulfate assimilation, phosphoadenylyl sulfate reduction by phosphoadenylyl-sulfate reductase (thioredoxin)"/>
    <property type="evidence" value="ECO:0000318"/>
    <property type="project" value="GO_Central"/>
</dbReference>
<dbReference type="CDD" id="cd02027">
    <property type="entry name" value="APSK"/>
    <property type="match status" value="1"/>
</dbReference>
<dbReference type="CDD" id="cd00517">
    <property type="entry name" value="ATPS"/>
    <property type="match status" value="1"/>
</dbReference>
<dbReference type="FunFam" id="3.10.400.10:FF:000003">
    <property type="entry name" value="Sulfate adenylyltransferase"/>
    <property type="match status" value="1"/>
</dbReference>
<dbReference type="FunFam" id="3.40.50.300:FF:000802">
    <property type="entry name" value="Sulfate adenylyltransferase"/>
    <property type="match status" value="1"/>
</dbReference>
<dbReference type="FunFam" id="3.40.50.620:FF:000052">
    <property type="entry name" value="Sulfate adenylyltransferase"/>
    <property type="match status" value="1"/>
</dbReference>
<dbReference type="Gene3D" id="3.40.50.620">
    <property type="entry name" value="HUPs"/>
    <property type="match status" value="1"/>
</dbReference>
<dbReference type="Gene3D" id="3.40.50.300">
    <property type="entry name" value="P-loop containing nucleotide triphosphate hydrolases"/>
    <property type="match status" value="1"/>
</dbReference>
<dbReference type="Gene3D" id="3.10.400.10">
    <property type="entry name" value="Sulfate adenylyltransferase"/>
    <property type="match status" value="1"/>
</dbReference>
<dbReference type="HAMAP" id="MF_03106">
    <property type="entry name" value="Sulf_adenylyltr_euk"/>
    <property type="match status" value="1"/>
</dbReference>
<dbReference type="InterPro" id="IPR002891">
    <property type="entry name" value="APS_kinase"/>
</dbReference>
<dbReference type="InterPro" id="IPR025980">
    <property type="entry name" value="ATP-Sase_PUA-like_dom"/>
</dbReference>
<dbReference type="InterPro" id="IPR027417">
    <property type="entry name" value="P-loop_NTPase"/>
</dbReference>
<dbReference type="InterPro" id="IPR015947">
    <property type="entry name" value="PUA-like_sf"/>
</dbReference>
<dbReference type="InterPro" id="IPR014729">
    <property type="entry name" value="Rossmann-like_a/b/a_fold"/>
</dbReference>
<dbReference type="InterPro" id="IPR027535">
    <property type="entry name" value="Sulf_adenylyltr_euk"/>
</dbReference>
<dbReference type="InterPro" id="IPR050512">
    <property type="entry name" value="Sulf_AdTrans/APS_kinase"/>
</dbReference>
<dbReference type="InterPro" id="IPR024951">
    <property type="entry name" value="Sulfurylase_cat_dom"/>
</dbReference>
<dbReference type="InterPro" id="IPR002650">
    <property type="entry name" value="Sulphate_adenylyltransferase"/>
</dbReference>
<dbReference type="NCBIfam" id="TIGR00455">
    <property type="entry name" value="apsK"/>
    <property type="match status" value="1"/>
</dbReference>
<dbReference type="NCBIfam" id="NF004040">
    <property type="entry name" value="PRK05537.1"/>
    <property type="match status" value="1"/>
</dbReference>
<dbReference type="NCBIfam" id="TIGR00339">
    <property type="entry name" value="sopT"/>
    <property type="match status" value="1"/>
</dbReference>
<dbReference type="PANTHER" id="PTHR42700">
    <property type="entry name" value="SULFATE ADENYLYLTRANSFERASE"/>
    <property type="match status" value="1"/>
</dbReference>
<dbReference type="PANTHER" id="PTHR42700:SF1">
    <property type="entry name" value="SULFATE ADENYLYLTRANSFERASE"/>
    <property type="match status" value="1"/>
</dbReference>
<dbReference type="Pfam" id="PF01583">
    <property type="entry name" value="APS_kinase"/>
    <property type="match status" value="1"/>
</dbReference>
<dbReference type="Pfam" id="PF01747">
    <property type="entry name" value="ATP-sulfurylase"/>
    <property type="match status" value="1"/>
</dbReference>
<dbReference type="Pfam" id="PF14306">
    <property type="entry name" value="PUA_2"/>
    <property type="match status" value="1"/>
</dbReference>
<dbReference type="SUPFAM" id="SSF52374">
    <property type="entry name" value="Nucleotidylyl transferase"/>
    <property type="match status" value="1"/>
</dbReference>
<dbReference type="SUPFAM" id="SSF52540">
    <property type="entry name" value="P-loop containing nucleoside triphosphate hydrolases"/>
    <property type="match status" value="1"/>
</dbReference>
<dbReference type="SUPFAM" id="SSF88697">
    <property type="entry name" value="PUA domain-like"/>
    <property type="match status" value="1"/>
</dbReference>
<feature type="chain" id="PRO_0000283692" description="Sulfate adenylyltransferase">
    <location>
        <begin position="1"/>
        <end position="574"/>
    </location>
</feature>
<feature type="region of interest" description="N-terminal" evidence="1">
    <location>
        <begin position="1"/>
        <end position="170"/>
    </location>
</feature>
<feature type="region of interest" description="Catalytic" evidence="1">
    <location>
        <begin position="171"/>
        <end position="395"/>
    </location>
</feature>
<feature type="region of interest" description="Allosteric regulation domain; adenylyl-sulfate kinase-like" evidence="1">
    <location>
        <begin position="396"/>
        <end position="574"/>
    </location>
</feature>
<feature type="active site" evidence="1">
    <location>
        <position position="199"/>
    </location>
</feature>
<feature type="active site" evidence="1">
    <location>
        <position position="200"/>
    </location>
</feature>
<feature type="active site" evidence="1">
    <location>
        <position position="201"/>
    </location>
</feature>
<feature type="binding site" evidence="1">
    <location>
        <begin position="198"/>
        <end position="201"/>
    </location>
    <ligand>
        <name>ATP</name>
        <dbReference type="ChEBI" id="CHEBI:30616"/>
    </ligand>
</feature>
<feature type="binding site" evidence="1">
    <location>
        <position position="198"/>
    </location>
    <ligand>
        <name>sulfate</name>
        <dbReference type="ChEBI" id="CHEBI:16189"/>
    </ligand>
</feature>
<feature type="binding site" evidence="1">
    <location>
        <position position="200"/>
    </location>
    <ligand>
        <name>sulfate</name>
        <dbReference type="ChEBI" id="CHEBI:16189"/>
    </ligand>
</feature>
<feature type="binding site" evidence="1">
    <location>
        <begin position="292"/>
        <end position="295"/>
    </location>
    <ligand>
        <name>ATP</name>
        <dbReference type="ChEBI" id="CHEBI:30616"/>
    </ligand>
</feature>
<feature type="binding site" evidence="1">
    <location>
        <position position="296"/>
    </location>
    <ligand>
        <name>sulfate</name>
        <dbReference type="ChEBI" id="CHEBI:16189"/>
    </ligand>
</feature>
<feature type="binding site" evidence="1">
    <location>
        <position position="334"/>
    </location>
    <ligand>
        <name>ATP</name>
        <dbReference type="ChEBI" id="CHEBI:30616"/>
    </ligand>
</feature>
<feature type="binding site" evidence="1">
    <location>
        <begin position="435"/>
        <end position="438"/>
    </location>
    <ligand>
        <name>3'-phosphoadenylyl sulfate</name>
        <dbReference type="ChEBI" id="CHEBI:58339"/>
        <note>allosteric inhibitor</note>
    </ligand>
</feature>
<feature type="binding site" evidence="1">
    <location>
        <position position="452"/>
    </location>
    <ligand>
        <name>3'-phosphoadenylyl sulfate</name>
        <dbReference type="ChEBI" id="CHEBI:58339"/>
        <note>allosteric inhibitor</note>
    </ligand>
</feature>
<feature type="binding site" evidence="1">
    <location>
        <begin position="478"/>
        <end position="479"/>
    </location>
    <ligand>
        <name>3'-phosphoadenylyl sulfate</name>
        <dbReference type="ChEBI" id="CHEBI:58339"/>
        <note>allosteric inhibitor</note>
    </ligand>
</feature>
<feature type="binding site" evidence="1">
    <location>
        <position position="519"/>
    </location>
    <ligand>
        <name>3'-phosphoadenylyl sulfate</name>
        <dbReference type="ChEBI" id="CHEBI:58339"/>
        <note>allosteric inhibitor</note>
    </ligand>
</feature>
<feature type="site" description="Transition state stabilizer" evidence="1">
    <location>
        <position position="204"/>
    </location>
</feature>
<feature type="site" description="Transition state stabilizer" evidence="1">
    <location>
        <position position="207"/>
    </location>
</feature>
<feature type="site" description="Induces change in substrate recognition on ATP binding" evidence="1">
    <location>
        <position position="331"/>
    </location>
</feature>
<keyword id="KW-0021">Allosteric enzyme</keyword>
<keyword id="KW-0028">Amino-acid biosynthesis</keyword>
<keyword id="KW-0067">ATP-binding</keyword>
<keyword id="KW-0198">Cysteine biosynthesis</keyword>
<keyword id="KW-0963">Cytoplasm</keyword>
<keyword id="KW-0486">Methionine biosynthesis</keyword>
<keyword id="KW-0547">Nucleotide-binding</keyword>
<keyword id="KW-0548">Nucleotidyltransferase</keyword>
<keyword id="KW-1185">Reference proteome</keyword>
<keyword id="KW-0808">Transferase</keyword>
<accession>Q4P460</accession>
<accession>A0A0D1E1R4</accession>
<organism>
    <name type="scientific">Mycosarcoma maydis</name>
    <name type="common">Corn smut fungus</name>
    <name type="synonym">Ustilago maydis</name>
    <dbReference type="NCBI Taxonomy" id="5270"/>
    <lineage>
        <taxon>Eukaryota</taxon>
        <taxon>Fungi</taxon>
        <taxon>Dikarya</taxon>
        <taxon>Basidiomycota</taxon>
        <taxon>Ustilaginomycotina</taxon>
        <taxon>Ustilaginomycetes</taxon>
        <taxon>Ustilaginales</taxon>
        <taxon>Ustilaginaceae</taxon>
        <taxon>Mycosarcoma</taxon>
    </lineage>
</organism>
<protein>
    <recommendedName>
        <fullName evidence="1">Sulfate adenylyltransferase</fullName>
        <ecNumber evidence="1">2.7.7.4</ecNumber>
    </recommendedName>
    <alternativeName>
        <fullName evidence="1">ATP-sulfurylase</fullName>
    </alternativeName>
    <alternativeName>
        <fullName evidence="1">Sulfate adenylate transferase</fullName>
        <shortName evidence="1">SAT</shortName>
    </alternativeName>
</protein>
<gene>
    <name evidence="1" type="primary">MET3</name>
    <name type="ORF">UMAG_05103</name>
</gene>
<name>MET3_MYCMD</name>
<proteinExistence type="inferred from homology"/>
<evidence type="ECO:0000255" key="1">
    <source>
        <dbReference type="HAMAP-Rule" id="MF_03106"/>
    </source>
</evidence>
<comment type="function">
    <text evidence="1">Catalyzes the first intracellular reaction of sulfate assimilation, forming adenosine-5'-phosphosulfate (APS) from inorganic sulfate and ATP. Plays an important role in sulfate activation as a component of the biosynthesis pathway of sulfur-containing amino acids.</text>
</comment>
<comment type="catalytic activity">
    <reaction evidence="1">
        <text>sulfate + ATP + H(+) = adenosine 5'-phosphosulfate + diphosphate</text>
        <dbReference type="Rhea" id="RHEA:18133"/>
        <dbReference type="ChEBI" id="CHEBI:15378"/>
        <dbReference type="ChEBI" id="CHEBI:16189"/>
        <dbReference type="ChEBI" id="CHEBI:30616"/>
        <dbReference type="ChEBI" id="CHEBI:33019"/>
        <dbReference type="ChEBI" id="CHEBI:58243"/>
        <dbReference type="EC" id="2.7.7.4"/>
    </reaction>
</comment>
<comment type="activity regulation">
    <text evidence="1">Allosterically inhibited by 3'-phosphoadenosine 5'-phosphosulfate (PAPS).</text>
</comment>
<comment type="pathway">
    <text evidence="1">Sulfur metabolism; hydrogen sulfide biosynthesis; sulfite from sulfate: step 1/3.</text>
</comment>
<comment type="subunit">
    <text evidence="1">Homohexamer. Dimer of trimers.</text>
</comment>
<comment type="subcellular location">
    <subcellularLocation>
        <location evidence="1">Cytoplasm</location>
    </subcellularLocation>
</comment>
<comment type="domain">
    <text evidence="1">The adenylyl-sulfate kinase (APS kinase) is non-functional. It is involved in allosteric regulation by PAPS. PAPS binding induces a large rotational rearrangement of domains lowering the substrate affinity of the enzyme.</text>
</comment>
<comment type="similarity">
    <text evidence="1">In the N-terminal section; belongs to the sulfate adenylyltransferase family.</text>
</comment>
<comment type="similarity">
    <text evidence="1">In the C-terminal section; belongs to the APS kinase family.</text>
</comment>
<sequence>MANAPHGGVLKDLLVRDAPIAAQLRQEADTLPEIVLTERQLCDLELIINGGFSPLQGFMNQTDYNGCLDNMRLADGNLFPMPITLDVDEQQIEALKIQQGARIALRDPRDDNAIAIITVTDVYAVDKVREATAVFGSDDLAHPAITYLHKSVKNFYVGGDVQAVSKPAYYDYVALRYTPAELRQHFAKISWRKVVAFQTRNPMHRAHRELTVRAARQRQANVLIHPVVGMTKPGDVDHYTRVRVYQSLMPRYPNGMATLALLPLAMRMGGPREALWHAIIRKNFGVTHFIVGRDHAGPGKDSSGKDFYGPYDAQTLVTKYTEELGIEMVPFQQMTYIPSTDEYQPVDEVTPGTQTMDISGTELRRRLRTGAAIPDWFSYESVVKTLRESYPPKAKQGFTLFLTGLHNSGKDQIARALQVKLNEQGGRSVSLLLGETVRSELSSELGFSPDDRQKNIQRISFVAAELTRAGAAVIAAPIAPYEKSRATARDIITKTGGAGNFFLIHVATPLEYCEATDRKGNYAKARAGQIKGFTGVDDVYEEPTDADLVVDISRQSVAEITHSIILLLEAQSLI</sequence>